<feature type="chain" id="PRO_0000233631" description="Ikitoxin">
    <location>
        <begin position="1"/>
        <end position="58"/>
    </location>
</feature>
<feature type="domain" description="LCN-type CS-alpha/beta" evidence="1">
    <location>
        <begin position="3"/>
        <end position="58"/>
    </location>
</feature>
<feature type="disulfide bond" evidence="1">
    <location>
        <begin position="18"/>
        <end position="41"/>
    </location>
</feature>
<feature type="disulfide bond" evidence="1">
    <location>
        <begin position="27"/>
        <end position="46"/>
    </location>
</feature>
<feature type="disulfide bond" evidence="1">
    <location>
        <begin position="31"/>
        <end position="48"/>
    </location>
</feature>
<comment type="function">
    <text>Beta toxins bind voltage-independently at site-4 of sodium channels (Nav) and shift the voltage of activation toward more negative potentials thereby affecting sodium channel activation and promoting spontaneous and repetitive firing. Does not produce effect when administered to blowfly and cabbage looper larvae. In mice, does not produce convulsions, tremors, increased ventilation nor death.</text>
</comment>
<comment type="subcellular location">
    <subcellularLocation>
        <location>Secreted</location>
    </subcellularLocation>
</comment>
<comment type="tissue specificity">
    <text>Expressed by the venom gland.</text>
</comment>
<comment type="domain">
    <text evidence="3">Has the structural arrangement of an alpha-helix connected to antiparallel beta-sheets by disulfide bonds (CS-alpha/beta).</text>
</comment>
<comment type="mass spectrometry" mass="6615.0" method="MALDI" evidence="2"/>
<comment type="similarity">
    <text evidence="3">Belongs to the long (3 C-C) scorpion toxin superfamily. Sodium channel inhibitor family. Beta subfamily.</text>
</comment>
<reference key="1">
    <citation type="journal article" date="2002" name="Eur. J. Biochem.">
        <title>A single charged surface residue modifies the activity of ikitoxin, a beta-type Na+ channel toxin from Parabuthus transvaalicus.</title>
        <authorList>
            <person name="Inceoglu A.B."/>
            <person name="Hayashida Y."/>
            <person name="Lango J."/>
            <person name="Ishida A.T."/>
            <person name="Hammock B.D."/>
        </authorList>
    </citation>
    <scope>PROTEIN SEQUENCE</scope>
    <scope>CHARACTERIZATION</scope>
    <scope>MASS SPECTROMETRY</scope>
    <source>
        <tissue>Venom</tissue>
    </source>
</reference>
<evidence type="ECO:0000255" key="1">
    <source>
        <dbReference type="PROSITE-ProRule" id="PRU01210"/>
    </source>
</evidence>
<evidence type="ECO:0000269" key="2">
    <source>
    </source>
</evidence>
<evidence type="ECO:0000305" key="3"/>
<name>IKIT_PARTR</name>
<sequence length="58" mass="6620">ADVPGNYPLDKDGNTYKCFLLGENEECLNVCKLHGVQYGYCYASKCWCEYLEDDKDSV</sequence>
<dbReference type="SMR" id="P0C1B8"/>
<dbReference type="GO" id="GO:0005576">
    <property type="term" value="C:extracellular region"/>
    <property type="evidence" value="ECO:0007669"/>
    <property type="project" value="UniProtKB-SubCell"/>
</dbReference>
<dbReference type="GO" id="GO:0019871">
    <property type="term" value="F:sodium channel inhibitor activity"/>
    <property type="evidence" value="ECO:0007669"/>
    <property type="project" value="InterPro"/>
</dbReference>
<dbReference type="GO" id="GO:0090729">
    <property type="term" value="F:toxin activity"/>
    <property type="evidence" value="ECO:0007669"/>
    <property type="project" value="UniProtKB-KW"/>
</dbReference>
<dbReference type="CDD" id="cd23106">
    <property type="entry name" value="neurotoxins_LC_scorpion"/>
    <property type="match status" value="1"/>
</dbReference>
<dbReference type="Gene3D" id="3.30.30.10">
    <property type="entry name" value="Knottin, scorpion toxin-like"/>
    <property type="match status" value="1"/>
</dbReference>
<dbReference type="InterPro" id="IPR044062">
    <property type="entry name" value="LCN-type_CS_alpha_beta_dom"/>
</dbReference>
<dbReference type="InterPro" id="IPR036574">
    <property type="entry name" value="Scorpion_toxin-like_sf"/>
</dbReference>
<dbReference type="InterPro" id="IPR002061">
    <property type="entry name" value="Scorpion_toxinL/defensin"/>
</dbReference>
<dbReference type="Pfam" id="PF00537">
    <property type="entry name" value="Toxin_3"/>
    <property type="match status" value="1"/>
</dbReference>
<dbReference type="SUPFAM" id="SSF57095">
    <property type="entry name" value="Scorpion toxin-like"/>
    <property type="match status" value="1"/>
</dbReference>
<dbReference type="PROSITE" id="PS51863">
    <property type="entry name" value="LCN_CSAB"/>
    <property type="match status" value="1"/>
</dbReference>
<keyword id="KW-0903">Direct protein sequencing</keyword>
<keyword id="KW-1015">Disulfide bond</keyword>
<keyword id="KW-0872">Ion channel impairing toxin</keyword>
<keyword id="KW-0528">Neurotoxin</keyword>
<keyword id="KW-0964">Secreted</keyword>
<keyword id="KW-0800">Toxin</keyword>
<keyword id="KW-0738">Voltage-gated sodium channel impairing toxin</keyword>
<accession>P0C1B8</accession>
<organism>
    <name type="scientific">Parabuthus transvaalicus</name>
    <name type="common">Transvaal thick-tailed scorpion</name>
    <dbReference type="NCBI Taxonomy" id="170972"/>
    <lineage>
        <taxon>Eukaryota</taxon>
        <taxon>Metazoa</taxon>
        <taxon>Ecdysozoa</taxon>
        <taxon>Arthropoda</taxon>
        <taxon>Chelicerata</taxon>
        <taxon>Arachnida</taxon>
        <taxon>Scorpiones</taxon>
        <taxon>Buthida</taxon>
        <taxon>Buthoidea</taxon>
        <taxon>Buthidae</taxon>
        <taxon>Parabuthus</taxon>
    </lineage>
</organism>
<protein>
    <recommendedName>
        <fullName>Ikitoxin</fullName>
    </recommendedName>
</protein>
<proteinExistence type="evidence at protein level"/>